<dbReference type="EC" id="2.1.1.-" evidence="3"/>
<dbReference type="EMBL" id="MT024570">
    <property type="protein sequence ID" value="QIQ51366.1"/>
    <property type="molecule type" value="Genomic_DNA"/>
</dbReference>
<dbReference type="SMR" id="A0A6G9KJC3"/>
<dbReference type="OrthoDB" id="1535081at2759"/>
<dbReference type="GO" id="GO:0008171">
    <property type="term" value="F:O-methyltransferase activity"/>
    <property type="evidence" value="ECO:0007669"/>
    <property type="project" value="InterPro"/>
</dbReference>
<dbReference type="GO" id="GO:0032259">
    <property type="term" value="P:methylation"/>
    <property type="evidence" value="ECO:0007669"/>
    <property type="project" value="UniProtKB-KW"/>
</dbReference>
<dbReference type="GO" id="GO:0044550">
    <property type="term" value="P:secondary metabolite biosynthetic process"/>
    <property type="evidence" value="ECO:0007669"/>
    <property type="project" value="UniProtKB-ARBA"/>
</dbReference>
<dbReference type="Gene3D" id="3.40.50.150">
    <property type="entry name" value="Vaccinia Virus protein VP39"/>
    <property type="match status" value="1"/>
</dbReference>
<dbReference type="Gene3D" id="1.10.10.10">
    <property type="entry name" value="Winged helix-like DNA-binding domain superfamily/Winged helix DNA-binding domain"/>
    <property type="match status" value="1"/>
</dbReference>
<dbReference type="InterPro" id="IPR016461">
    <property type="entry name" value="COMT-like"/>
</dbReference>
<dbReference type="InterPro" id="IPR001077">
    <property type="entry name" value="O_MeTrfase_dom"/>
</dbReference>
<dbReference type="InterPro" id="IPR029063">
    <property type="entry name" value="SAM-dependent_MTases_sf"/>
</dbReference>
<dbReference type="InterPro" id="IPR036388">
    <property type="entry name" value="WH-like_DNA-bd_sf"/>
</dbReference>
<dbReference type="InterPro" id="IPR036390">
    <property type="entry name" value="WH_DNA-bd_sf"/>
</dbReference>
<dbReference type="PANTHER" id="PTHR43712:SF5">
    <property type="entry name" value="O-METHYLTRANSFERASE ASQN-RELATED"/>
    <property type="match status" value="1"/>
</dbReference>
<dbReference type="PANTHER" id="PTHR43712">
    <property type="entry name" value="PUTATIVE (AFU_ORTHOLOGUE AFUA_4G14580)-RELATED"/>
    <property type="match status" value="1"/>
</dbReference>
<dbReference type="Pfam" id="PF00891">
    <property type="entry name" value="Methyltransf_2"/>
    <property type="match status" value="1"/>
</dbReference>
<dbReference type="SUPFAM" id="SSF53335">
    <property type="entry name" value="S-adenosyl-L-methionine-dependent methyltransferases"/>
    <property type="match status" value="1"/>
</dbReference>
<dbReference type="SUPFAM" id="SSF46785">
    <property type="entry name" value="Winged helix' DNA-binding domain"/>
    <property type="match status" value="1"/>
</dbReference>
<dbReference type="PROSITE" id="PS51683">
    <property type="entry name" value="SAM_OMT_II"/>
    <property type="match status" value="1"/>
</dbReference>
<name>NANE_ASPNN</name>
<gene>
    <name evidence="4" type="primary">nanE</name>
    <name type="ORF">FE257_001453</name>
</gene>
<reference key="1">
    <citation type="journal article" date="2020" name="J. Am. Chem. Soc.">
        <title>Biosynthesis of a new benzazepine alkaloid nanangelenin A from Aspergillus nanangensis involves an unusual l-kynurenine-incorporating NRPS catalyzing regioselective lactamization.</title>
        <authorList>
            <person name="Li H."/>
            <person name="Gilchrist C.L.M."/>
            <person name="Phan C.S."/>
            <person name="Lacey H.J."/>
            <person name="Vuong D."/>
            <person name="Moggach S.A."/>
            <person name="Lacey E."/>
            <person name="Piggott A.M."/>
            <person name="Chooi Y.H."/>
        </authorList>
    </citation>
    <scope>NUCLEOTIDE SEQUENCE [GENOMIC DNA]</scope>
    <scope>FUNCTION</scope>
    <scope>PATHWAY</scope>
    <source>
        <strain>CBS 146238 / FRR 6048 / MST FP2251</strain>
    </source>
</reference>
<feature type="chain" id="PRO_0000452969" description="N-methyltransferase nanE">
    <location>
        <begin position="1"/>
        <end position="405"/>
    </location>
</feature>
<feature type="binding site" evidence="1">
    <location>
        <begin position="238"/>
        <end position="239"/>
    </location>
    <ligand>
        <name>S-adenosyl-L-methionine</name>
        <dbReference type="ChEBI" id="CHEBI:59789"/>
    </ligand>
</feature>
<feature type="binding site" evidence="2">
    <location>
        <position position="261"/>
    </location>
    <ligand>
        <name>S-adenosyl-L-methionine</name>
        <dbReference type="ChEBI" id="CHEBI:59789"/>
    </ligand>
</feature>
<feature type="binding site" evidence="1">
    <location>
        <begin position="290"/>
        <end position="291"/>
    </location>
    <ligand>
        <name>S-adenosyl-L-methionine</name>
        <dbReference type="ChEBI" id="CHEBI:59789"/>
    </ligand>
</feature>
<accession>A0A6G9KJC3</accession>
<protein>
    <recommendedName>
        <fullName evidence="4">N-methyltransferase nanE</fullName>
        <ecNumber evidence="3">2.1.1.-</ecNumber>
    </recommendedName>
    <alternativeName>
        <fullName evidence="4">Nanangelenin A biosynthesis cluster protein E</fullName>
    </alternativeName>
</protein>
<comment type="function">
    <text evidence="3">N-methyltransferase; part of the gene cluster that mediates the biosynthesis of the benzazepine alkaloid nanangelenin A which contains an unprecedented 3,4-dihydro-1-benzazepine-2,5-dione-N-prenyl-N-acetoxy-anthranilamide scaffold (PubMed:32182055). The first step of nanangelenin biosynthesis is catalyzed by the indoleamine 2,3-dioxygenase nanC which produces N-formyl-kynurenine through the catabolism of tryptophan (PubMed:32182055). The two-module NRPS nanA then utilizes anthranilate (Ant) and L-kynurenine (L-Kyn) to assemble the dipeptide product nanangelenin B (PubMed:32182055). The first adenylation domain of nanA (A1) loads anthranilate onto the T1 domain, while A2 loads kynurenine, generated through spontaneous nonenzymatic deformylation of the nanC-supplied N-formyl-kynurenine (PubMed:32182055). The peptide bond formation between the tethered amino acids is catalyzed by the first condensation domain (C1) between anthranilate's carbonyl carbon and kynurenine's aliphatic primary amine (PubMed:32182055). The second C domain (C2) catalyzes the final cyclization event between the aromatic amine of kynurenine and the tethered carbonyl carbon, yielding nanangelenin B (PubMed:32182055). The terminal T3 domain enhances the catalytic efficiency of C2, suggesting the T2-tethered Ant-L-Kyn is transferred to T3 prior to cyclization by C2 (PubMed:32182055). Once released from nanA, nanangelenin B is then prenylated by the prenyltransferase nanD to form nanangelenin C (PubMed:32182055). Nanangelenin C is then N-hydroxylated by the FAD-dependent monooxygenase nanF and further acetylated by the acetyltransferase nanB to yield nanangelenin F (PubMed:32182055). Finally, the N-methyltransferase nanE methylates the amide nitrogen of 1-benzazepine to convert nanangelenin F into nanangelenin A (PubMed:32182055). NanE is also able to methylate most of the intermediates of the pathway such as nanangelenin B and nanangelenin C to produce nanangelenin D and nanangelenin E, respectively (PubMed:32182055).</text>
</comment>
<comment type="pathway">
    <text evidence="3">Secondary metabolite biosynthesis.</text>
</comment>
<comment type="similarity">
    <text evidence="5">Belongs to the class I-like SAM-binding methyltransferase superfamily. Cation-independent O-methyltransferase family.</text>
</comment>
<evidence type="ECO:0000250" key="1">
    <source>
        <dbReference type="UniProtKB" id="O04385"/>
    </source>
</evidence>
<evidence type="ECO:0000255" key="2">
    <source>
        <dbReference type="PROSITE-ProRule" id="PRU01020"/>
    </source>
</evidence>
<evidence type="ECO:0000269" key="3">
    <source>
    </source>
</evidence>
<evidence type="ECO:0000303" key="4">
    <source>
    </source>
</evidence>
<evidence type="ECO:0000305" key="5"/>
<sequence>MTIANTPAELLASSISTLASRYAEKVQAGENADTEIASIVSACKDLDALVTPPESWNDRMAMSYTISTAIALLLNWDVFQILAAQAKPTSLETLATSCGCSKSLLRCALREAVAHRMLDELSPETYALNSRSSCLLDENKAAWIHYLTDIGLVTAAYLPKYVKSINGKIPEHSHRIALQMAFNVDETFYEFLHRKDPKRGVNFDKAMQRHIKGDAQASIESVFDFSILRPGAVVVDVGGGKGHHCIRIAKKHPHLSFIIQDYEANGPSDGEDTLPEALARRVRWQRHNFHHKQPMDGADVYLLSNILMDNTVSDCNRILTNIVDAMVPNHSVLLVDDAIDTLSEDSHSAYSSSMNLHMLSCFGTLFRTQEDWLMLFSEVAGGKLSIVSSWMIDAGRMIFALRRKF</sequence>
<organism>
    <name type="scientific">Aspergillus nanangensis</name>
    <dbReference type="NCBI Taxonomy" id="2582783"/>
    <lineage>
        <taxon>Eukaryota</taxon>
        <taxon>Fungi</taxon>
        <taxon>Dikarya</taxon>
        <taxon>Ascomycota</taxon>
        <taxon>Pezizomycotina</taxon>
        <taxon>Eurotiomycetes</taxon>
        <taxon>Eurotiomycetidae</taxon>
        <taxon>Eurotiales</taxon>
        <taxon>Aspergillaceae</taxon>
        <taxon>Aspergillus</taxon>
        <taxon>Aspergillus subgen. Circumdati</taxon>
    </lineage>
</organism>
<keyword id="KW-0489">Methyltransferase</keyword>
<keyword id="KW-0949">S-adenosyl-L-methionine</keyword>
<keyword id="KW-0808">Transferase</keyword>
<proteinExistence type="inferred from homology"/>